<accession>Q17YP0</accession>
<comment type="function">
    <text evidence="2">Catalyzes the reversible phosphorolytic breakdown of the N-glycosidic bond in the beta-(deoxy)ribonucleoside molecules, with the formation of the corresponding free purine bases and pentose-1-phosphate.</text>
</comment>
<comment type="catalytic activity">
    <reaction evidence="2">
        <text>a purine D-ribonucleoside + phosphate = a purine nucleobase + alpha-D-ribose 1-phosphate</text>
        <dbReference type="Rhea" id="RHEA:19805"/>
        <dbReference type="ChEBI" id="CHEBI:26386"/>
        <dbReference type="ChEBI" id="CHEBI:43474"/>
        <dbReference type="ChEBI" id="CHEBI:57720"/>
        <dbReference type="ChEBI" id="CHEBI:142355"/>
        <dbReference type="EC" id="2.4.2.1"/>
    </reaction>
</comment>
<comment type="catalytic activity">
    <reaction evidence="2">
        <text>a purine 2'-deoxy-D-ribonucleoside + phosphate = a purine nucleobase + 2-deoxy-alpha-D-ribose 1-phosphate</text>
        <dbReference type="Rhea" id="RHEA:36431"/>
        <dbReference type="ChEBI" id="CHEBI:26386"/>
        <dbReference type="ChEBI" id="CHEBI:43474"/>
        <dbReference type="ChEBI" id="CHEBI:57259"/>
        <dbReference type="ChEBI" id="CHEBI:142361"/>
        <dbReference type="EC" id="2.4.2.1"/>
    </reaction>
</comment>
<comment type="subunit">
    <text evidence="2">Homohexamer; trimer of homodimers.</text>
</comment>
<comment type="similarity">
    <text evidence="2">Belongs to the PNP/UDP phosphorylase family.</text>
</comment>
<evidence type="ECO:0000250" key="1">
    <source>
        <dbReference type="UniProtKB" id="P50389"/>
    </source>
</evidence>
<evidence type="ECO:0000255" key="2">
    <source>
        <dbReference type="HAMAP-Rule" id="MF_01627"/>
    </source>
</evidence>
<protein>
    <recommendedName>
        <fullName evidence="2">Purine nucleoside phosphorylase DeoD-type</fullName>
        <shortName evidence="2">PNP</shortName>
        <ecNumber evidence="2">2.4.2.1</ecNumber>
    </recommendedName>
</protein>
<organism>
    <name type="scientific">Helicobacter acinonychis (strain Sheeba)</name>
    <dbReference type="NCBI Taxonomy" id="382638"/>
    <lineage>
        <taxon>Bacteria</taxon>
        <taxon>Pseudomonadati</taxon>
        <taxon>Campylobacterota</taxon>
        <taxon>Epsilonproteobacteria</taxon>
        <taxon>Campylobacterales</taxon>
        <taxon>Helicobacteraceae</taxon>
        <taxon>Helicobacter</taxon>
    </lineage>
</organism>
<dbReference type="EC" id="2.4.2.1" evidence="2"/>
<dbReference type="EMBL" id="AM260522">
    <property type="protein sequence ID" value="CAJ99236.1"/>
    <property type="molecule type" value="Genomic_DNA"/>
</dbReference>
<dbReference type="RefSeq" id="WP_011577350.1">
    <property type="nucleotide sequence ID" value="NC_008229.1"/>
</dbReference>
<dbReference type="SMR" id="Q17YP0"/>
<dbReference type="STRING" id="382638.Hac_0400"/>
<dbReference type="GeneID" id="31757907"/>
<dbReference type="KEGG" id="hac:Hac_0400"/>
<dbReference type="eggNOG" id="COG0813">
    <property type="taxonomic scope" value="Bacteria"/>
</dbReference>
<dbReference type="HOGENOM" id="CLU_068457_2_0_7"/>
<dbReference type="OrthoDB" id="9782889at2"/>
<dbReference type="BioCyc" id="HACI382638:HAC_RS01815-MONOMER"/>
<dbReference type="Proteomes" id="UP000000775">
    <property type="component" value="Chromosome"/>
</dbReference>
<dbReference type="GO" id="GO:0005829">
    <property type="term" value="C:cytosol"/>
    <property type="evidence" value="ECO:0007669"/>
    <property type="project" value="TreeGrafter"/>
</dbReference>
<dbReference type="GO" id="GO:0004731">
    <property type="term" value="F:purine-nucleoside phosphorylase activity"/>
    <property type="evidence" value="ECO:0007669"/>
    <property type="project" value="UniProtKB-EC"/>
</dbReference>
<dbReference type="GO" id="GO:0006152">
    <property type="term" value="P:purine nucleoside catabolic process"/>
    <property type="evidence" value="ECO:0007669"/>
    <property type="project" value="TreeGrafter"/>
</dbReference>
<dbReference type="CDD" id="cd09006">
    <property type="entry name" value="PNP_EcPNPI-like"/>
    <property type="match status" value="1"/>
</dbReference>
<dbReference type="Gene3D" id="3.40.50.1580">
    <property type="entry name" value="Nucleoside phosphorylase domain"/>
    <property type="match status" value="1"/>
</dbReference>
<dbReference type="HAMAP" id="MF_01627">
    <property type="entry name" value="Pur_nucleosid_phosp"/>
    <property type="match status" value="1"/>
</dbReference>
<dbReference type="InterPro" id="IPR004402">
    <property type="entry name" value="DeoD-type"/>
</dbReference>
<dbReference type="InterPro" id="IPR018016">
    <property type="entry name" value="Nucleoside_phosphorylase_CS"/>
</dbReference>
<dbReference type="InterPro" id="IPR000845">
    <property type="entry name" value="Nucleoside_phosphorylase_d"/>
</dbReference>
<dbReference type="InterPro" id="IPR035994">
    <property type="entry name" value="Nucleoside_phosphorylase_sf"/>
</dbReference>
<dbReference type="NCBIfam" id="TIGR00107">
    <property type="entry name" value="deoD"/>
    <property type="match status" value="1"/>
</dbReference>
<dbReference type="NCBIfam" id="NF004489">
    <property type="entry name" value="PRK05819.1"/>
    <property type="match status" value="1"/>
</dbReference>
<dbReference type="PANTHER" id="PTHR43691:SF11">
    <property type="entry name" value="FI09636P-RELATED"/>
    <property type="match status" value="1"/>
</dbReference>
<dbReference type="PANTHER" id="PTHR43691">
    <property type="entry name" value="URIDINE PHOSPHORYLASE"/>
    <property type="match status" value="1"/>
</dbReference>
<dbReference type="Pfam" id="PF01048">
    <property type="entry name" value="PNP_UDP_1"/>
    <property type="match status" value="1"/>
</dbReference>
<dbReference type="SUPFAM" id="SSF53167">
    <property type="entry name" value="Purine and uridine phosphorylases"/>
    <property type="match status" value="1"/>
</dbReference>
<dbReference type="PROSITE" id="PS01232">
    <property type="entry name" value="PNP_UDP_1"/>
    <property type="match status" value="1"/>
</dbReference>
<reference key="1">
    <citation type="journal article" date="2006" name="PLoS Genet.">
        <title>Who ate whom? Adaptive Helicobacter genomic changes that accompanied a host jump from early humans to large felines.</title>
        <authorList>
            <person name="Eppinger M."/>
            <person name="Baar C."/>
            <person name="Linz B."/>
            <person name="Raddatz G."/>
            <person name="Lanz C."/>
            <person name="Keller H."/>
            <person name="Morelli G."/>
            <person name="Gressmann H."/>
            <person name="Achtman M."/>
            <person name="Schuster S.C."/>
        </authorList>
    </citation>
    <scope>NUCLEOTIDE SEQUENCE [LARGE SCALE GENOMIC DNA]</scope>
    <source>
        <strain>Sheeba</strain>
    </source>
</reference>
<name>DEOD_HELAH</name>
<proteinExistence type="inferred from homology"/>
<feature type="chain" id="PRO_1000186199" description="Purine nucleoside phosphorylase DeoD-type">
    <location>
        <begin position="1"/>
        <end position="233"/>
    </location>
</feature>
<feature type="active site" description="Proton donor" evidence="2">
    <location>
        <position position="204"/>
    </location>
</feature>
<feature type="binding site" evidence="1">
    <location>
        <position position="4"/>
    </location>
    <ligand>
        <name>a purine D-ribonucleoside</name>
        <dbReference type="ChEBI" id="CHEBI:142355"/>
        <note>ligand shared between dimeric partners</note>
    </ligand>
</feature>
<feature type="binding site" description="in other chain" evidence="1">
    <location>
        <position position="20"/>
    </location>
    <ligand>
        <name>phosphate</name>
        <dbReference type="ChEBI" id="CHEBI:43474"/>
        <note>ligand shared between dimeric partners</note>
    </ligand>
</feature>
<feature type="binding site" description="in other chain" evidence="1">
    <location>
        <position position="24"/>
    </location>
    <ligand>
        <name>phosphate</name>
        <dbReference type="ChEBI" id="CHEBI:43474"/>
        <note>ligand shared between dimeric partners</note>
    </ligand>
</feature>
<feature type="binding site" evidence="1">
    <location>
        <position position="43"/>
    </location>
    <ligand>
        <name>phosphate</name>
        <dbReference type="ChEBI" id="CHEBI:43474"/>
        <note>ligand shared between dimeric partners</note>
    </ligand>
</feature>
<feature type="binding site" description="in other chain" evidence="1">
    <location>
        <begin position="87"/>
        <end position="90"/>
    </location>
    <ligand>
        <name>phosphate</name>
        <dbReference type="ChEBI" id="CHEBI:43474"/>
        <note>ligand shared between dimeric partners</note>
    </ligand>
</feature>
<feature type="binding site" description="in other chain" evidence="1">
    <location>
        <begin position="179"/>
        <end position="181"/>
    </location>
    <ligand>
        <name>a purine D-ribonucleoside</name>
        <dbReference type="ChEBI" id="CHEBI:142355"/>
        <note>ligand shared between dimeric partners</note>
    </ligand>
</feature>
<feature type="binding site" description="in other chain" evidence="1">
    <location>
        <begin position="203"/>
        <end position="204"/>
    </location>
    <ligand>
        <name>a purine D-ribonucleoside</name>
        <dbReference type="ChEBI" id="CHEBI:142355"/>
        <note>ligand shared between dimeric partners</note>
    </ligand>
</feature>
<feature type="site" description="Important for catalytic activity" evidence="2">
    <location>
        <position position="217"/>
    </location>
</feature>
<gene>
    <name evidence="2" type="primary">deoD</name>
    <name type="ordered locus">Hac_0400</name>
</gene>
<keyword id="KW-0328">Glycosyltransferase</keyword>
<keyword id="KW-0808">Transferase</keyword>
<sequence length="233" mass="25898">MTPHINAKIGDFHPQCILCGDPLRVSYIAKNFLQDAREITNVRNMLGFSGKYKGKEISLMGHGMGIASCTIYVTELVKTYQVKELLRIGTCGAISPKVGLRDIIMVTGASTDSKTNRIRFLNHDLSATPDFELSLRAYQTAKRLEIDLKVGNIFTSDFFYSFETHAFDLLAKYNHLGIEMEAAGLYATAMELSAKALCLCSVSDHLITKEALSPKERIESFNNMIILALEMMG</sequence>